<keyword id="KW-0150">Chloroplast</keyword>
<keyword id="KW-0378">Hydrolase</keyword>
<keyword id="KW-0934">Plastid</keyword>
<keyword id="KW-0645">Protease</keyword>
<keyword id="KW-0720">Serine protease</keyword>
<organism>
    <name type="scientific">Nasturtium officinale</name>
    <name type="common">Watercress</name>
    <name type="synonym">Rorippa nasturtium-aquaticum</name>
    <dbReference type="NCBI Taxonomy" id="65948"/>
    <lineage>
        <taxon>Eukaryota</taxon>
        <taxon>Viridiplantae</taxon>
        <taxon>Streptophyta</taxon>
        <taxon>Embryophyta</taxon>
        <taxon>Tracheophyta</taxon>
        <taxon>Spermatophyta</taxon>
        <taxon>Magnoliopsida</taxon>
        <taxon>eudicotyledons</taxon>
        <taxon>Gunneridae</taxon>
        <taxon>Pentapetalae</taxon>
        <taxon>rosids</taxon>
        <taxon>malvids</taxon>
        <taxon>Brassicales</taxon>
        <taxon>Brassicaceae</taxon>
        <taxon>Cardamineae</taxon>
        <taxon>Nasturtium</taxon>
    </lineage>
</organism>
<name>CLPP_NASOF</name>
<sequence length="196" mass="22055">MPIGVPKVPFRSPGEGDTSWVDIYNRLYRERLFFLGQEVDTEISNQLISLMIYLSIEKDTKDLYLFINSPGGWVISGMAVYDTMQFVRPDVQTICMGLAASIASFILVGGAITKRIAFPHARVMIHQPASSFYEAQTGEFILEAEELLKVRETITRVYVQRTGKPIWVVSEDMERDVFMSATEAQAHGIVDLVAVQ</sequence>
<dbReference type="EC" id="3.4.21.92" evidence="1"/>
<dbReference type="EMBL" id="AP009376">
    <property type="protein sequence ID" value="BAF50663.1"/>
    <property type="molecule type" value="Genomic_DNA"/>
</dbReference>
<dbReference type="RefSeq" id="YP_001123839.1">
    <property type="nucleotide sequence ID" value="NC_009275.1"/>
</dbReference>
<dbReference type="SMR" id="A4QLV8"/>
<dbReference type="MEROPS" id="S14.002"/>
<dbReference type="GeneID" id="4962138"/>
<dbReference type="GO" id="GO:0009570">
    <property type="term" value="C:chloroplast stroma"/>
    <property type="evidence" value="ECO:0007669"/>
    <property type="project" value="UniProtKB-SubCell"/>
</dbReference>
<dbReference type="GO" id="GO:0009368">
    <property type="term" value="C:endopeptidase Clp complex"/>
    <property type="evidence" value="ECO:0007669"/>
    <property type="project" value="TreeGrafter"/>
</dbReference>
<dbReference type="GO" id="GO:0004176">
    <property type="term" value="F:ATP-dependent peptidase activity"/>
    <property type="evidence" value="ECO:0007669"/>
    <property type="project" value="InterPro"/>
</dbReference>
<dbReference type="GO" id="GO:0051117">
    <property type="term" value="F:ATPase binding"/>
    <property type="evidence" value="ECO:0007669"/>
    <property type="project" value="TreeGrafter"/>
</dbReference>
<dbReference type="GO" id="GO:0004252">
    <property type="term" value="F:serine-type endopeptidase activity"/>
    <property type="evidence" value="ECO:0007669"/>
    <property type="project" value="UniProtKB-UniRule"/>
</dbReference>
<dbReference type="GO" id="GO:0006515">
    <property type="term" value="P:protein quality control for misfolded or incompletely synthesized proteins"/>
    <property type="evidence" value="ECO:0007669"/>
    <property type="project" value="TreeGrafter"/>
</dbReference>
<dbReference type="CDD" id="cd07017">
    <property type="entry name" value="S14_ClpP_2"/>
    <property type="match status" value="1"/>
</dbReference>
<dbReference type="FunFam" id="3.90.226.10:FF:000006">
    <property type="entry name" value="ATP-dependent Clp protease proteolytic subunit"/>
    <property type="match status" value="1"/>
</dbReference>
<dbReference type="Gene3D" id="3.90.226.10">
    <property type="entry name" value="2-enoyl-CoA Hydratase, Chain A, domain 1"/>
    <property type="match status" value="1"/>
</dbReference>
<dbReference type="HAMAP" id="MF_00444">
    <property type="entry name" value="ClpP"/>
    <property type="match status" value="1"/>
</dbReference>
<dbReference type="InterPro" id="IPR001907">
    <property type="entry name" value="ClpP"/>
</dbReference>
<dbReference type="InterPro" id="IPR029045">
    <property type="entry name" value="ClpP/crotonase-like_dom_sf"/>
</dbReference>
<dbReference type="InterPro" id="IPR023562">
    <property type="entry name" value="ClpP/TepA"/>
</dbReference>
<dbReference type="InterPro" id="IPR033135">
    <property type="entry name" value="ClpP_His_AS"/>
</dbReference>
<dbReference type="PANTHER" id="PTHR10381">
    <property type="entry name" value="ATP-DEPENDENT CLP PROTEASE PROTEOLYTIC SUBUNIT"/>
    <property type="match status" value="1"/>
</dbReference>
<dbReference type="PANTHER" id="PTHR10381:SF15">
    <property type="entry name" value="CHLOROPLASTIC ATP-DEPENDENT CLP PROTEASE PROTEOLYTIC SUBUNIT 1"/>
    <property type="match status" value="1"/>
</dbReference>
<dbReference type="Pfam" id="PF00574">
    <property type="entry name" value="CLP_protease"/>
    <property type="match status" value="1"/>
</dbReference>
<dbReference type="PRINTS" id="PR00127">
    <property type="entry name" value="CLPPROTEASEP"/>
</dbReference>
<dbReference type="SUPFAM" id="SSF52096">
    <property type="entry name" value="ClpP/crotonase"/>
    <property type="match status" value="1"/>
</dbReference>
<dbReference type="PROSITE" id="PS00382">
    <property type="entry name" value="CLP_PROTEASE_HIS"/>
    <property type="match status" value="1"/>
</dbReference>
<reference key="1">
    <citation type="submission" date="2007-03" db="EMBL/GenBank/DDBJ databases">
        <title>Sequencing analysis of Nasturtium officinale chloroplast DNA.</title>
        <authorList>
            <person name="Hosouchi T."/>
            <person name="Tsuruoka H."/>
            <person name="Kotani H."/>
        </authorList>
    </citation>
    <scope>NUCLEOTIDE SEQUENCE [LARGE SCALE GENOMIC DNA]</scope>
</reference>
<evidence type="ECO:0000255" key="1">
    <source>
        <dbReference type="HAMAP-Rule" id="MF_00444"/>
    </source>
</evidence>
<comment type="function">
    <text evidence="1">Cleaves peptides in various proteins in a process that requires ATP hydrolysis. Has a chymotrypsin-like activity. Plays a major role in the degradation of misfolded proteins.</text>
</comment>
<comment type="catalytic activity">
    <reaction evidence="1">
        <text>Hydrolysis of proteins to small peptides in the presence of ATP and magnesium. alpha-casein is the usual test substrate. In the absence of ATP, only oligopeptides shorter than five residues are hydrolyzed (such as succinyl-Leu-Tyr-|-NHMec, and Leu-Tyr-Leu-|-Tyr-Trp, in which cleavage of the -Tyr-|-Leu- and -Tyr-|-Trp bonds also occurs).</text>
        <dbReference type="EC" id="3.4.21.92"/>
    </reaction>
</comment>
<comment type="subunit">
    <text>Component of the chloroplastic Clp protease core complex.</text>
</comment>
<comment type="subcellular location">
    <subcellularLocation>
        <location evidence="1">Plastid</location>
        <location evidence="1">Chloroplast stroma</location>
    </subcellularLocation>
</comment>
<comment type="similarity">
    <text evidence="1">Belongs to the peptidase S14 family.</text>
</comment>
<protein>
    <recommendedName>
        <fullName evidence="1">ATP-dependent Clp protease proteolytic subunit</fullName>
        <ecNumber evidence="1">3.4.21.92</ecNumber>
    </recommendedName>
    <alternativeName>
        <fullName evidence="1">Endopeptidase Clp</fullName>
    </alternativeName>
</protein>
<gene>
    <name evidence="1" type="primary">clpP</name>
</gene>
<geneLocation type="chloroplast"/>
<feature type="chain" id="PRO_0000309306" description="ATP-dependent Clp protease proteolytic subunit">
    <location>
        <begin position="1"/>
        <end position="196"/>
    </location>
</feature>
<feature type="active site" description="Nucleophile" evidence="1">
    <location>
        <position position="101"/>
    </location>
</feature>
<feature type="active site" evidence="1">
    <location>
        <position position="126"/>
    </location>
</feature>
<accession>A4QLV8</accession>
<proteinExistence type="inferred from homology"/>